<comment type="function">
    <text evidence="1">Participates in chromosomal partition during cell division. May act via the formation of a condensin-like complex containing Smc and ScpB that pull DNA away from mid-cell into both cell halves.</text>
</comment>
<comment type="subunit">
    <text evidence="1">Component of a cohesin-like complex composed of ScpA, ScpB and the Smc homodimer, in which ScpA and ScpB bind to the head domain of Smc. The presence of the three proteins is required for the association of the complex with DNA.</text>
</comment>
<comment type="subcellular location">
    <subcellularLocation>
        <location evidence="1">Cytoplasm</location>
    </subcellularLocation>
    <text evidence="1">Associated with two foci at the outer edges of the nucleoid region in young cells, and at four foci within both cell halves in older cells.</text>
</comment>
<comment type="similarity">
    <text evidence="1">Belongs to the ScpA family.</text>
</comment>
<name>SCPA_CALS4</name>
<reference key="1">
    <citation type="journal article" date="2002" name="Genome Res.">
        <title>A complete sequence of the T. tengcongensis genome.</title>
        <authorList>
            <person name="Bao Q."/>
            <person name="Tian Y."/>
            <person name="Li W."/>
            <person name="Xu Z."/>
            <person name="Xuan Z."/>
            <person name="Hu S."/>
            <person name="Dong W."/>
            <person name="Yang J."/>
            <person name="Chen Y."/>
            <person name="Xue Y."/>
            <person name="Xu Y."/>
            <person name="Lai X."/>
            <person name="Huang L."/>
            <person name="Dong X."/>
            <person name="Ma Y."/>
            <person name="Ling L."/>
            <person name="Tan H."/>
            <person name="Chen R."/>
            <person name="Wang J."/>
            <person name="Yu J."/>
            <person name="Yang H."/>
        </authorList>
    </citation>
    <scope>NUCLEOTIDE SEQUENCE [LARGE SCALE GENOMIC DNA]</scope>
    <source>
        <strain>DSM 15242 / JCM 11007 / NBRC 100824 / MB4</strain>
    </source>
</reference>
<feature type="chain" id="PRO_0000211120" description="Segregation and condensation protein A">
    <location>
        <begin position="1"/>
        <end position="247"/>
    </location>
</feature>
<accession>Q8RAA1</accession>
<organism>
    <name type="scientific">Caldanaerobacter subterraneus subsp. tengcongensis (strain DSM 15242 / JCM 11007 / NBRC 100824 / MB4)</name>
    <name type="common">Thermoanaerobacter tengcongensis</name>
    <dbReference type="NCBI Taxonomy" id="273068"/>
    <lineage>
        <taxon>Bacteria</taxon>
        <taxon>Bacillati</taxon>
        <taxon>Bacillota</taxon>
        <taxon>Clostridia</taxon>
        <taxon>Thermoanaerobacterales</taxon>
        <taxon>Thermoanaerobacteraceae</taxon>
        <taxon>Caldanaerobacter</taxon>
    </lineage>
</organism>
<protein>
    <recommendedName>
        <fullName evidence="1">Segregation and condensation protein A</fullName>
    </recommendedName>
</protein>
<keyword id="KW-0131">Cell cycle</keyword>
<keyword id="KW-0132">Cell division</keyword>
<keyword id="KW-0159">Chromosome partition</keyword>
<keyword id="KW-0963">Cytoplasm</keyword>
<keyword id="KW-1185">Reference proteome</keyword>
<evidence type="ECO:0000255" key="1">
    <source>
        <dbReference type="HAMAP-Rule" id="MF_01805"/>
    </source>
</evidence>
<sequence length="247" mass="29272">MYTVKLEIFEGPFDLLFHLIEKNEIDLMDIPISIILDQYMEYIRSLQEMDLDVASEFIVMAATLVEIKSRMLLPKFRLEEEAEKIEEDPREELVKQLIEYKKYKEIAQLLSGICGINRRFFKEEPDLNYIDKRVALNYSVEDIVNVYRKILERNKEKENKIEIKKEEYTVVSKIKELLTYLVKKPALWFSEIVRKSRSKLEVVVSFVALLELIKLNRVAAEQQTAYGDIFIRFLGREGRKHDPGRQD</sequence>
<gene>
    <name evidence="1" type="primary">scpA</name>
    <name type="ordered locus">TTE1324</name>
</gene>
<dbReference type="EMBL" id="AE008691">
    <property type="protein sequence ID" value="AAM24548.1"/>
    <property type="molecule type" value="Genomic_DNA"/>
</dbReference>
<dbReference type="RefSeq" id="WP_009610254.1">
    <property type="nucleotide sequence ID" value="NC_003869.1"/>
</dbReference>
<dbReference type="SMR" id="Q8RAA1"/>
<dbReference type="STRING" id="273068.TTE1324"/>
<dbReference type="KEGG" id="tte:TTE1324"/>
<dbReference type="eggNOG" id="COG1354">
    <property type="taxonomic scope" value="Bacteria"/>
</dbReference>
<dbReference type="HOGENOM" id="CLU_038686_3_0_9"/>
<dbReference type="OrthoDB" id="9811016at2"/>
<dbReference type="Proteomes" id="UP000000555">
    <property type="component" value="Chromosome"/>
</dbReference>
<dbReference type="GO" id="GO:0005737">
    <property type="term" value="C:cytoplasm"/>
    <property type="evidence" value="ECO:0007669"/>
    <property type="project" value="UniProtKB-SubCell"/>
</dbReference>
<dbReference type="GO" id="GO:0051301">
    <property type="term" value="P:cell division"/>
    <property type="evidence" value="ECO:0007669"/>
    <property type="project" value="UniProtKB-KW"/>
</dbReference>
<dbReference type="GO" id="GO:0007059">
    <property type="term" value="P:chromosome segregation"/>
    <property type="evidence" value="ECO:0007669"/>
    <property type="project" value="UniProtKB-UniRule"/>
</dbReference>
<dbReference type="GO" id="GO:0006260">
    <property type="term" value="P:DNA replication"/>
    <property type="evidence" value="ECO:0007669"/>
    <property type="project" value="UniProtKB-UniRule"/>
</dbReference>
<dbReference type="Gene3D" id="6.10.250.2410">
    <property type="match status" value="1"/>
</dbReference>
<dbReference type="Gene3D" id="1.10.10.580">
    <property type="entry name" value="Structural maintenance of chromosome 1. Chain E"/>
    <property type="match status" value="1"/>
</dbReference>
<dbReference type="HAMAP" id="MF_01805">
    <property type="entry name" value="ScpA"/>
    <property type="match status" value="1"/>
</dbReference>
<dbReference type="InterPro" id="IPR003768">
    <property type="entry name" value="ScpA"/>
</dbReference>
<dbReference type="InterPro" id="IPR023093">
    <property type="entry name" value="ScpA-like_C"/>
</dbReference>
<dbReference type="PANTHER" id="PTHR33969">
    <property type="entry name" value="SEGREGATION AND CONDENSATION PROTEIN A"/>
    <property type="match status" value="1"/>
</dbReference>
<dbReference type="PANTHER" id="PTHR33969:SF2">
    <property type="entry name" value="SEGREGATION AND CONDENSATION PROTEIN A"/>
    <property type="match status" value="1"/>
</dbReference>
<dbReference type="Pfam" id="PF02616">
    <property type="entry name" value="SMC_ScpA"/>
    <property type="match status" value="1"/>
</dbReference>
<proteinExistence type="inferred from homology"/>